<dbReference type="EC" id="3.4.19.12" evidence="7"/>
<dbReference type="EMBL" id="L04959">
    <property type="protein sequence ID" value="AAF01345.1"/>
    <property type="status" value="ALT_FRAME"/>
    <property type="molecule type" value="mRNA"/>
</dbReference>
<dbReference type="EMBL" id="L04958">
    <property type="protein sequence ID" value="AAF01346.1"/>
    <property type="molecule type" value="mRNA"/>
</dbReference>
<dbReference type="EMBL" id="L04960">
    <property type="protein sequence ID" value="AAF01347.1"/>
    <property type="molecule type" value="Genomic_DNA"/>
</dbReference>
<dbReference type="EMBL" id="L04960">
    <property type="protein sequence ID" value="AAF01348.1"/>
    <property type="molecule type" value="Genomic_DNA"/>
</dbReference>
<dbReference type="EMBL" id="AE014297">
    <property type="protein sequence ID" value="AAF57198.1"/>
    <property type="molecule type" value="Genomic_DNA"/>
</dbReference>
<dbReference type="EMBL" id="AE014297">
    <property type="protein sequence ID" value="AAN14291.1"/>
    <property type="molecule type" value="Genomic_DNA"/>
</dbReference>
<dbReference type="EMBL" id="AF145677">
    <property type="protein sequence ID" value="AAD38652.1"/>
    <property type="molecule type" value="mRNA"/>
</dbReference>
<dbReference type="PIR" id="B49132">
    <property type="entry name" value="B49132"/>
</dbReference>
<dbReference type="RefSeq" id="NP_524612.2">
    <molecule id="P55824-1"/>
    <property type="nucleotide sequence ID" value="NM_079873.5"/>
</dbReference>
<dbReference type="RefSeq" id="NP_733455.1">
    <molecule id="P55824-3"/>
    <property type="nucleotide sequence ID" value="NM_170576.3"/>
</dbReference>
<dbReference type="SMR" id="P55824"/>
<dbReference type="BioGRID" id="68590">
    <property type="interactions" value="34"/>
</dbReference>
<dbReference type="FunCoup" id="P55824">
    <property type="interactions" value="2131"/>
</dbReference>
<dbReference type="IntAct" id="P55824">
    <property type="interactions" value="12"/>
</dbReference>
<dbReference type="STRING" id="7227.FBpp0085202"/>
<dbReference type="MEROPS" id="C19.007"/>
<dbReference type="GlyGen" id="P55824">
    <property type="glycosylation" value="3 sites, 1 O-linked glycan (1 site)"/>
</dbReference>
<dbReference type="iPTMnet" id="P55824"/>
<dbReference type="PaxDb" id="7227-FBpp0085202"/>
<dbReference type="EnsemblMetazoa" id="FBtr0085843">
    <molecule id="P55824-1"/>
    <property type="protein sequence ID" value="FBpp0085202"/>
    <property type="gene ID" value="FBgn0005632"/>
</dbReference>
<dbReference type="EnsemblMetazoa" id="FBtr0085844">
    <molecule id="P55824-3"/>
    <property type="protein sequence ID" value="FBpp0085203"/>
    <property type="gene ID" value="FBgn0005632"/>
</dbReference>
<dbReference type="GeneID" id="43749"/>
<dbReference type="KEGG" id="dme:Dmel_CG1945"/>
<dbReference type="AGR" id="FB:FBgn0005632"/>
<dbReference type="CTD" id="43749"/>
<dbReference type="FlyBase" id="FBgn0005632">
    <property type="gene designation" value="faf"/>
</dbReference>
<dbReference type="VEuPathDB" id="VectorBase:FBgn0005632"/>
<dbReference type="eggNOG" id="KOG1866">
    <property type="taxonomic scope" value="Eukaryota"/>
</dbReference>
<dbReference type="GeneTree" id="ENSGT00940000168609"/>
<dbReference type="InParanoid" id="P55824"/>
<dbReference type="OMA" id="YDYEREC"/>
<dbReference type="OrthoDB" id="289038at2759"/>
<dbReference type="PhylomeDB" id="P55824"/>
<dbReference type="Reactome" id="R-DME-2173795">
    <property type="pathway name" value="Downregulation of SMAD2/3:SMAD4 transcriptional activity"/>
</dbReference>
<dbReference type="Reactome" id="R-DME-5689880">
    <property type="pathway name" value="Ub-specific processing proteases"/>
</dbReference>
<dbReference type="Reactome" id="R-DME-8866652">
    <property type="pathway name" value="Synthesis of active ubiquitin: roles of E1 and E2 enzymes"/>
</dbReference>
<dbReference type="Reactome" id="R-DME-9013420">
    <property type="pathway name" value="RHOU GTPase cycle"/>
</dbReference>
<dbReference type="Reactome" id="R-DME-9013424">
    <property type="pathway name" value="RHOV GTPase cycle"/>
</dbReference>
<dbReference type="Reactome" id="R-DME-9033241">
    <property type="pathway name" value="Peroxisomal protein import"/>
</dbReference>
<dbReference type="SignaLink" id="P55824"/>
<dbReference type="BioGRID-ORCS" id="43749">
    <property type="hits" value="1 hit in 3 CRISPR screens"/>
</dbReference>
<dbReference type="ChiTaRS" id="faf">
    <property type="organism name" value="fly"/>
</dbReference>
<dbReference type="GenomeRNAi" id="43749"/>
<dbReference type="PRO" id="PR:P55824"/>
<dbReference type="Proteomes" id="UP000000803">
    <property type="component" value="Chromosome 3R"/>
</dbReference>
<dbReference type="Bgee" id="FBgn0005632">
    <property type="expression patterns" value="Expressed in adult midgut enterocyte in digestive tract and 248 other cell types or tissues"/>
</dbReference>
<dbReference type="ExpressionAtlas" id="P55824">
    <property type="expression patterns" value="baseline and differential"/>
</dbReference>
<dbReference type="GO" id="GO:0005737">
    <property type="term" value="C:cytoplasm"/>
    <property type="evidence" value="ECO:0000314"/>
    <property type="project" value="FlyBase"/>
</dbReference>
<dbReference type="GO" id="GO:0005829">
    <property type="term" value="C:cytosol"/>
    <property type="evidence" value="ECO:0000318"/>
    <property type="project" value="GO_Central"/>
</dbReference>
<dbReference type="GO" id="GO:0005634">
    <property type="term" value="C:nucleus"/>
    <property type="evidence" value="ECO:0000318"/>
    <property type="project" value="GO_Central"/>
</dbReference>
<dbReference type="GO" id="GO:0004843">
    <property type="term" value="F:cysteine-type deubiquitinase activity"/>
    <property type="evidence" value="ECO:0000314"/>
    <property type="project" value="FlyBase"/>
</dbReference>
<dbReference type="GO" id="GO:0016477">
    <property type="term" value="P:cell migration"/>
    <property type="evidence" value="ECO:0000318"/>
    <property type="project" value="GO_Central"/>
</dbReference>
<dbReference type="GO" id="GO:0007349">
    <property type="term" value="P:cellularization"/>
    <property type="evidence" value="ECO:0000315"/>
    <property type="project" value="FlyBase"/>
</dbReference>
<dbReference type="GO" id="GO:0050829">
    <property type="term" value="P:defense response to Gram-negative bacterium"/>
    <property type="evidence" value="ECO:0007001"/>
    <property type="project" value="FlyBase"/>
</dbReference>
<dbReference type="GO" id="GO:0009950">
    <property type="term" value="P:dorsal/ventral axis specification"/>
    <property type="evidence" value="ECO:0000315"/>
    <property type="project" value="FlyBase"/>
</dbReference>
<dbReference type="GO" id="GO:0008354">
    <property type="term" value="P:germ cell migration"/>
    <property type="evidence" value="ECO:0000304"/>
    <property type="project" value="FlyBase"/>
</dbReference>
<dbReference type="GO" id="GO:0008583">
    <property type="term" value="P:mystery cell differentiation"/>
    <property type="evidence" value="ECO:0000315"/>
    <property type="project" value="FlyBase"/>
</dbReference>
<dbReference type="GO" id="GO:0045824">
    <property type="term" value="P:negative regulation of innate immune response"/>
    <property type="evidence" value="ECO:0007001"/>
    <property type="project" value="FlyBase"/>
</dbReference>
<dbReference type="GO" id="GO:0035192">
    <property type="term" value="P:nuclear cortical migration"/>
    <property type="evidence" value="ECO:0000315"/>
    <property type="project" value="FlyBase"/>
</dbReference>
<dbReference type="GO" id="GO:0048477">
    <property type="term" value="P:oogenesis"/>
    <property type="evidence" value="ECO:0007669"/>
    <property type="project" value="UniProtKB-KW"/>
</dbReference>
<dbReference type="GO" id="GO:0030513">
    <property type="term" value="P:positive regulation of BMP signaling pathway"/>
    <property type="evidence" value="ECO:0000316"/>
    <property type="project" value="FlyBase"/>
</dbReference>
<dbReference type="GO" id="GO:0016579">
    <property type="term" value="P:protein deubiquitination"/>
    <property type="evidence" value="ECO:0007669"/>
    <property type="project" value="InterPro"/>
</dbReference>
<dbReference type="GO" id="GO:0006508">
    <property type="term" value="P:proteolysis"/>
    <property type="evidence" value="ECO:0007669"/>
    <property type="project" value="UniProtKB-KW"/>
</dbReference>
<dbReference type="GO" id="GO:0031647">
    <property type="term" value="P:regulation of protein stability"/>
    <property type="evidence" value="ECO:0000318"/>
    <property type="project" value="GO_Central"/>
</dbReference>
<dbReference type="GO" id="GO:0007601">
    <property type="term" value="P:visual perception"/>
    <property type="evidence" value="ECO:0007669"/>
    <property type="project" value="UniProtKB-KW"/>
</dbReference>
<dbReference type="CDD" id="cd02659">
    <property type="entry name" value="peptidase_C19C"/>
    <property type="match status" value="1"/>
</dbReference>
<dbReference type="Gene3D" id="3.90.70.10">
    <property type="entry name" value="Cysteine proteinases"/>
    <property type="match status" value="1"/>
</dbReference>
<dbReference type="InterPro" id="IPR016024">
    <property type="entry name" value="ARM-type_fold"/>
</dbReference>
<dbReference type="InterPro" id="IPR056850">
    <property type="entry name" value="ARM_UBP34_24_USP9X_Y"/>
</dbReference>
<dbReference type="InterPro" id="IPR021905">
    <property type="entry name" value="DUF3517"/>
</dbReference>
<dbReference type="InterPro" id="IPR038765">
    <property type="entry name" value="Papain-like_cys_pep_sf"/>
</dbReference>
<dbReference type="InterPro" id="IPR050164">
    <property type="entry name" value="Peptidase_C19"/>
</dbReference>
<dbReference type="InterPro" id="IPR001394">
    <property type="entry name" value="Peptidase_C19_UCH"/>
</dbReference>
<dbReference type="InterPro" id="IPR055176">
    <property type="entry name" value="UBP24/USP9X/USP9Y_UBL"/>
</dbReference>
<dbReference type="InterPro" id="IPR018200">
    <property type="entry name" value="USP_CS"/>
</dbReference>
<dbReference type="InterPro" id="IPR028889">
    <property type="entry name" value="USP_dom"/>
</dbReference>
<dbReference type="PANTHER" id="PTHR24006">
    <property type="entry name" value="UBIQUITIN CARBOXYL-TERMINAL HYDROLASE"/>
    <property type="match status" value="1"/>
</dbReference>
<dbReference type="PANTHER" id="PTHR24006:SF925">
    <property type="entry name" value="UBIQUITINYL HYDROLASE 1"/>
    <property type="match status" value="1"/>
</dbReference>
<dbReference type="Pfam" id="PF25010">
    <property type="entry name" value="ARM_UBP24_USP9X-Y"/>
    <property type="match status" value="1"/>
</dbReference>
<dbReference type="Pfam" id="PF12030">
    <property type="entry name" value="DUF3517"/>
    <property type="match status" value="1"/>
</dbReference>
<dbReference type="Pfam" id="PF00443">
    <property type="entry name" value="UCH"/>
    <property type="match status" value="1"/>
</dbReference>
<dbReference type="Pfam" id="PF22900">
    <property type="entry name" value="UCH_UBL1"/>
    <property type="match status" value="1"/>
</dbReference>
<dbReference type="SUPFAM" id="SSF48371">
    <property type="entry name" value="ARM repeat"/>
    <property type="match status" value="1"/>
</dbReference>
<dbReference type="SUPFAM" id="SSF54001">
    <property type="entry name" value="Cysteine proteinases"/>
    <property type="match status" value="1"/>
</dbReference>
<dbReference type="PROSITE" id="PS00972">
    <property type="entry name" value="USP_1"/>
    <property type="match status" value="1"/>
</dbReference>
<dbReference type="PROSITE" id="PS00973">
    <property type="entry name" value="USP_2"/>
    <property type="match status" value="1"/>
</dbReference>
<dbReference type="PROSITE" id="PS50235">
    <property type="entry name" value="USP_3"/>
    <property type="match status" value="1"/>
</dbReference>
<name>FAF_DROME</name>
<gene>
    <name type="primary">faf</name>
    <name type="ORF">CG1945</name>
</gene>
<feature type="chain" id="PRO_0000080688" description="Probable ubiquitin carboxyl-terminal hydrolase FAF">
    <location>
        <begin position="1"/>
        <end position="2778"/>
    </location>
</feature>
<feature type="domain" description="USP" evidence="1">
    <location>
        <begin position="1668"/>
        <end position="2062"/>
    </location>
</feature>
<feature type="region of interest" description="Disordered" evidence="4">
    <location>
        <begin position="1"/>
        <end position="85"/>
    </location>
</feature>
<feature type="region of interest" description="Disordered" evidence="4">
    <location>
        <begin position="1065"/>
        <end position="1094"/>
    </location>
</feature>
<feature type="region of interest" description="Disordered" evidence="4">
    <location>
        <begin position="2568"/>
        <end position="2632"/>
    </location>
</feature>
<feature type="region of interest" description="Disordered" evidence="4">
    <location>
        <begin position="2644"/>
        <end position="2691"/>
    </location>
</feature>
<feature type="compositionally biased region" description="Low complexity" evidence="4">
    <location>
        <begin position="10"/>
        <end position="39"/>
    </location>
</feature>
<feature type="compositionally biased region" description="Polar residues" evidence="4">
    <location>
        <begin position="71"/>
        <end position="85"/>
    </location>
</feature>
<feature type="compositionally biased region" description="Low complexity" evidence="4">
    <location>
        <begin position="1070"/>
        <end position="1082"/>
    </location>
</feature>
<feature type="compositionally biased region" description="Low complexity" evidence="4">
    <location>
        <begin position="2614"/>
        <end position="2627"/>
    </location>
</feature>
<feature type="compositionally biased region" description="Low complexity" evidence="4">
    <location>
        <begin position="2644"/>
        <end position="2671"/>
    </location>
</feature>
<feature type="compositionally biased region" description="Polar residues" evidence="4">
    <location>
        <begin position="2672"/>
        <end position="2691"/>
    </location>
</feature>
<feature type="active site" description="Nucleophile" evidence="2 3 10">
    <location>
        <position position="1677"/>
    </location>
</feature>
<feature type="active site" description="Proton acceptor" evidence="2 3">
    <location>
        <position position="1986"/>
    </location>
</feature>
<feature type="modified residue" description="Phosphoserine" evidence="6">
    <location>
        <position position="924"/>
    </location>
</feature>
<feature type="splice variant" id="VSP_005269" description="In isoform 3." evidence="8">
    <original>KCRRVIIKKLVESKDEEDATTATTAATTEVTTSPATAIATAATLEPAGMSELTTMVEKNLIISQENPQAKSSLQ</original>
    <variation>VTRANNV</variation>
    <location>
        <begin position="2705"/>
        <end position="2778"/>
    </location>
</feature>
<feature type="mutagenesis site" description="Loss of enzymatic activity. Increased susceptibility to infections by E.cloacae. No effect on binding and polyubiquitination of imd." evidence="7">
    <original>C</original>
    <variation>S</variation>
    <location>
        <position position="1677"/>
    </location>
</feature>
<feature type="sequence conflict" description="In Ref. 1; AAF01345/AAF01346." evidence="9" ref="1">
    <original>E</original>
    <variation>D</variation>
    <location>
        <position position="234"/>
    </location>
</feature>
<feature type="sequence conflict" description="In Ref. 1; AAF01345." evidence="9" ref="1">
    <original>T</original>
    <variation>S</variation>
    <location>
        <position position="2725"/>
    </location>
</feature>
<keyword id="KW-0025">Alternative splicing</keyword>
<keyword id="KW-0217">Developmental protein</keyword>
<keyword id="KW-0221">Differentiation</keyword>
<keyword id="KW-0378">Hydrolase</keyword>
<keyword id="KW-0896">Oogenesis</keyword>
<keyword id="KW-0597">Phosphoprotein</keyword>
<keyword id="KW-0645">Protease</keyword>
<keyword id="KW-1185">Reference proteome</keyword>
<keyword id="KW-0716">Sensory transduction</keyword>
<keyword id="KW-0788">Thiol protease</keyword>
<keyword id="KW-0832">Ubl conjugation</keyword>
<keyword id="KW-0833">Ubl conjugation pathway</keyword>
<keyword id="KW-0844">Vision</keyword>
<evidence type="ECO:0000255" key="1">
    <source>
        <dbReference type="PROSITE-ProRule" id="PRU01035"/>
    </source>
</evidence>
<evidence type="ECO:0000255" key="2">
    <source>
        <dbReference type="PROSITE-ProRule" id="PRU10092"/>
    </source>
</evidence>
<evidence type="ECO:0000255" key="3">
    <source>
        <dbReference type="PROSITE-ProRule" id="PRU10093"/>
    </source>
</evidence>
<evidence type="ECO:0000256" key="4">
    <source>
        <dbReference type="SAM" id="MobiDB-lite"/>
    </source>
</evidence>
<evidence type="ECO:0000269" key="5">
    <source>
    </source>
</evidence>
<evidence type="ECO:0000269" key="6">
    <source>
    </source>
</evidence>
<evidence type="ECO:0000269" key="7">
    <source>
    </source>
</evidence>
<evidence type="ECO:0000303" key="8">
    <source>
    </source>
</evidence>
<evidence type="ECO:0000305" key="9"/>
<evidence type="ECO:0000305" key="10">
    <source>
    </source>
</evidence>
<comment type="function">
    <text evidence="5 7">Ubiquitin C-terminal hydrolase involved in development and the imd/NF-kappa-B (IMD) signaling cascade (PubMed:1295747, PubMed:23919485). Required for eye and embryo development, and plays a role in compound eye assembly and oogenesis respectively (PubMed:1295747). In the larval eye disks, cells outside the assembling facets require this protein for short-range cell interactions that prevent the mystery cells from becoming photoreceptors (PubMed:1295747). Also required for nuclear migration and cellularization in early embryogenesis and could play a role in pole cell determination, development or function (PubMed:1295747). Regulates the IMD signaling cascade at later stages of infection (around 6 hours post-infection) by inhibiting the expression of the antimicrobial peptides Dpt and Dro (PubMed:23919485). Acts by modulating the state of imd polyubiquitination and/or stability; a function which appears to be independent of its enzymatic activity (PubMed:23919485). In turn, imd enhances the polyubiquitination and stability of faf suggesting that they may form a regulatory feedback mechanism within the Imd pathway (PubMed:23919485).</text>
</comment>
<comment type="catalytic activity">
    <reaction evidence="7">
        <text>Thiol-dependent hydrolysis of ester, thioester, amide, peptide and isopeptide bonds formed by the C-terminal Gly of ubiquitin (a 76-residue protein attached to proteins as an intracellular targeting signal).</text>
        <dbReference type="EC" id="3.4.19.12"/>
    </reaction>
</comment>
<comment type="subunit">
    <text evidence="7">Interacts with imd.</text>
</comment>
<comment type="alternative products">
    <event type="alternative splicing"/>
    <isoform>
        <id>P55824-1</id>
        <name>1</name>
        <sequence type="displayed"/>
    </isoform>
    <isoform>
        <id>P55824-3</id>
        <name>3</name>
        <sequence type="described" ref="VSP_005269"/>
    </isoform>
    <text>Experimental confirmation may be lacking for some isoforms.</text>
</comment>
<comment type="tissue specificity">
    <text evidence="5 7">Eye disks and ovaries (PubMed:1295747). Expressed in larval fat body (PubMed:23919485).</text>
</comment>
<comment type="developmental stage">
    <text evidence="5">Expressed both maternally and zygotically.</text>
</comment>
<comment type="PTM">
    <text evidence="7">Ubiquitinated. Ubiquitination is enhanced by the expression of imd.</text>
</comment>
<comment type="similarity">
    <text evidence="9">Belongs to the peptidase C19 family.</text>
</comment>
<comment type="sequence caution" evidence="9">
    <molecule>Isoform 1</molecule>
    <conflict type="frameshift">
        <sequence resource="EMBL-CDS" id="AAF01345"/>
    </conflict>
</comment>
<proteinExistence type="evidence at protein level"/>
<accession>P55824</accession>
<accession>Q9V9T6</accession>
<accession>Q9Y0Z7</accession>
<reference key="1">
    <citation type="journal article" date="1992" name="Development">
        <title>The fat facets gene is required for Drosophila eye and embryo development.</title>
        <authorList>
            <person name="Fischer-Vize J.A."/>
            <person name="Rubin G.M."/>
            <person name="Lehmann R."/>
        </authorList>
    </citation>
    <scope>NUCLEOTIDE SEQUENCE [MRNA] (ISOFORMS 1 AND 3)</scope>
    <scope>TISSUE SPECIFICITY</scope>
    <scope>DEVELOPMENTAL STAGE</scope>
    <source>
        <tissue>Eye imaginal disk</tissue>
    </source>
</reference>
<reference key="2">
    <citation type="journal article" date="2000" name="Science">
        <title>The genome sequence of Drosophila melanogaster.</title>
        <authorList>
            <person name="Adams M.D."/>
            <person name="Celniker S.E."/>
            <person name="Holt R.A."/>
            <person name="Evans C.A."/>
            <person name="Gocayne J.D."/>
            <person name="Amanatides P.G."/>
            <person name="Scherer S.E."/>
            <person name="Li P.W."/>
            <person name="Hoskins R.A."/>
            <person name="Galle R.F."/>
            <person name="George R.A."/>
            <person name="Lewis S.E."/>
            <person name="Richards S."/>
            <person name="Ashburner M."/>
            <person name="Henderson S.N."/>
            <person name="Sutton G.G."/>
            <person name="Wortman J.R."/>
            <person name="Yandell M.D."/>
            <person name="Zhang Q."/>
            <person name="Chen L.X."/>
            <person name="Brandon R.C."/>
            <person name="Rogers Y.-H.C."/>
            <person name="Blazej R.G."/>
            <person name="Champe M."/>
            <person name="Pfeiffer B.D."/>
            <person name="Wan K.H."/>
            <person name="Doyle C."/>
            <person name="Baxter E.G."/>
            <person name="Helt G."/>
            <person name="Nelson C.R."/>
            <person name="Miklos G.L.G."/>
            <person name="Abril J.F."/>
            <person name="Agbayani A."/>
            <person name="An H.-J."/>
            <person name="Andrews-Pfannkoch C."/>
            <person name="Baldwin D."/>
            <person name="Ballew R.M."/>
            <person name="Basu A."/>
            <person name="Baxendale J."/>
            <person name="Bayraktaroglu L."/>
            <person name="Beasley E.M."/>
            <person name="Beeson K.Y."/>
            <person name="Benos P.V."/>
            <person name="Berman B.P."/>
            <person name="Bhandari D."/>
            <person name="Bolshakov S."/>
            <person name="Borkova D."/>
            <person name="Botchan M.R."/>
            <person name="Bouck J."/>
            <person name="Brokstein P."/>
            <person name="Brottier P."/>
            <person name="Burtis K.C."/>
            <person name="Busam D.A."/>
            <person name="Butler H."/>
            <person name="Cadieu E."/>
            <person name="Center A."/>
            <person name="Chandra I."/>
            <person name="Cherry J.M."/>
            <person name="Cawley S."/>
            <person name="Dahlke C."/>
            <person name="Davenport L.B."/>
            <person name="Davies P."/>
            <person name="de Pablos B."/>
            <person name="Delcher A."/>
            <person name="Deng Z."/>
            <person name="Mays A.D."/>
            <person name="Dew I."/>
            <person name="Dietz S.M."/>
            <person name="Dodson K."/>
            <person name="Doup L.E."/>
            <person name="Downes M."/>
            <person name="Dugan-Rocha S."/>
            <person name="Dunkov B.C."/>
            <person name="Dunn P."/>
            <person name="Durbin K.J."/>
            <person name="Evangelista C.C."/>
            <person name="Ferraz C."/>
            <person name="Ferriera S."/>
            <person name="Fleischmann W."/>
            <person name="Fosler C."/>
            <person name="Gabrielian A.E."/>
            <person name="Garg N.S."/>
            <person name="Gelbart W.M."/>
            <person name="Glasser K."/>
            <person name="Glodek A."/>
            <person name="Gong F."/>
            <person name="Gorrell J.H."/>
            <person name="Gu Z."/>
            <person name="Guan P."/>
            <person name="Harris M."/>
            <person name="Harris N.L."/>
            <person name="Harvey D.A."/>
            <person name="Heiman T.J."/>
            <person name="Hernandez J.R."/>
            <person name="Houck J."/>
            <person name="Hostin D."/>
            <person name="Houston K.A."/>
            <person name="Howland T.J."/>
            <person name="Wei M.-H."/>
            <person name="Ibegwam C."/>
            <person name="Jalali M."/>
            <person name="Kalush F."/>
            <person name="Karpen G.H."/>
            <person name="Ke Z."/>
            <person name="Kennison J.A."/>
            <person name="Ketchum K.A."/>
            <person name="Kimmel B.E."/>
            <person name="Kodira C.D."/>
            <person name="Kraft C.L."/>
            <person name="Kravitz S."/>
            <person name="Kulp D."/>
            <person name="Lai Z."/>
            <person name="Lasko P."/>
            <person name="Lei Y."/>
            <person name="Levitsky A.A."/>
            <person name="Li J.H."/>
            <person name="Li Z."/>
            <person name="Liang Y."/>
            <person name="Lin X."/>
            <person name="Liu X."/>
            <person name="Mattei B."/>
            <person name="McIntosh T.C."/>
            <person name="McLeod M.P."/>
            <person name="McPherson D."/>
            <person name="Merkulov G."/>
            <person name="Milshina N.V."/>
            <person name="Mobarry C."/>
            <person name="Morris J."/>
            <person name="Moshrefi A."/>
            <person name="Mount S.M."/>
            <person name="Moy M."/>
            <person name="Murphy B."/>
            <person name="Murphy L."/>
            <person name="Muzny D.M."/>
            <person name="Nelson D.L."/>
            <person name="Nelson D.R."/>
            <person name="Nelson K.A."/>
            <person name="Nixon K."/>
            <person name="Nusskern D.R."/>
            <person name="Pacleb J.M."/>
            <person name="Palazzolo M."/>
            <person name="Pittman G.S."/>
            <person name="Pan S."/>
            <person name="Pollard J."/>
            <person name="Puri V."/>
            <person name="Reese M.G."/>
            <person name="Reinert K."/>
            <person name="Remington K."/>
            <person name="Saunders R.D.C."/>
            <person name="Scheeler F."/>
            <person name="Shen H."/>
            <person name="Shue B.C."/>
            <person name="Siden-Kiamos I."/>
            <person name="Simpson M."/>
            <person name="Skupski M.P."/>
            <person name="Smith T.J."/>
            <person name="Spier E."/>
            <person name="Spradling A.C."/>
            <person name="Stapleton M."/>
            <person name="Strong R."/>
            <person name="Sun E."/>
            <person name="Svirskas R."/>
            <person name="Tector C."/>
            <person name="Turner R."/>
            <person name="Venter E."/>
            <person name="Wang A.H."/>
            <person name="Wang X."/>
            <person name="Wang Z.-Y."/>
            <person name="Wassarman D.A."/>
            <person name="Weinstock G.M."/>
            <person name="Weissenbach J."/>
            <person name="Williams S.M."/>
            <person name="Woodage T."/>
            <person name="Worley K.C."/>
            <person name="Wu D."/>
            <person name="Yang S."/>
            <person name="Yao Q.A."/>
            <person name="Ye J."/>
            <person name="Yeh R.-F."/>
            <person name="Zaveri J.S."/>
            <person name="Zhan M."/>
            <person name="Zhang G."/>
            <person name="Zhao Q."/>
            <person name="Zheng L."/>
            <person name="Zheng X.H."/>
            <person name="Zhong F.N."/>
            <person name="Zhong W."/>
            <person name="Zhou X."/>
            <person name="Zhu S.C."/>
            <person name="Zhu X."/>
            <person name="Smith H.O."/>
            <person name="Gibbs R.A."/>
            <person name="Myers E.W."/>
            <person name="Rubin G.M."/>
            <person name="Venter J.C."/>
        </authorList>
    </citation>
    <scope>NUCLEOTIDE SEQUENCE [LARGE SCALE GENOMIC DNA]</scope>
    <source>
        <strain>Berkeley</strain>
    </source>
</reference>
<reference key="3">
    <citation type="journal article" date="2002" name="Genome Biol.">
        <title>Annotation of the Drosophila melanogaster euchromatic genome: a systematic review.</title>
        <authorList>
            <person name="Misra S."/>
            <person name="Crosby M.A."/>
            <person name="Mungall C.J."/>
            <person name="Matthews B.B."/>
            <person name="Campbell K.S."/>
            <person name="Hradecky P."/>
            <person name="Huang Y."/>
            <person name="Kaminker J.S."/>
            <person name="Millburn G.H."/>
            <person name="Prochnik S.E."/>
            <person name="Smith C.D."/>
            <person name="Tupy J.L."/>
            <person name="Whitfield E.J."/>
            <person name="Bayraktaroglu L."/>
            <person name="Berman B.P."/>
            <person name="Bettencourt B.R."/>
            <person name="Celniker S.E."/>
            <person name="de Grey A.D.N.J."/>
            <person name="Drysdale R.A."/>
            <person name="Harris N.L."/>
            <person name="Richter J."/>
            <person name="Russo S."/>
            <person name="Schroeder A.J."/>
            <person name="Shu S.Q."/>
            <person name="Stapleton M."/>
            <person name="Yamada C."/>
            <person name="Ashburner M."/>
            <person name="Gelbart W.M."/>
            <person name="Rubin G.M."/>
            <person name="Lewis S.E."/>
        </authorList>
    </citation>
    <scope>GENOME REANNOTATION</scope>
    <scope>ALTERNATIVE SPLICING</scope>
    <source>
        <strain>Berkeley</strain>
    </source>
</reference>
<reference key="4">
    <citation type="journal article" date="2000" name="Science">
        <title>A Drosophila complementary DNA resource.</title>
        <authorList>
            <person name="Rubin G.M."/>
            <person name="Hong L."/>
            <person name="Brokstein P."/>
            <person name="Evans-Holm M."/>
            <person name="Frise E."/>
            <person name="Stapleton M."/>
            <person name="Harvey D.A."/>
        </authorList>
    </citation>
    <scope>NUCLEOTIDE SEQUENCE [LARGE SCALE MRNA] OF 1089-2778 (ISOFORM 1)</scope>
    <source>
        <strain>Berkeley</strain>
        <tissue>Embryo</tissue>
    </source>
</reference>
<reference key="5">
    <citation type="journal article" date="2008" name="J. Proteome Res.">
        <title>Phosphoproteome analysis of Drosophila melanogaster embryos.</title>
        <authorList>
            <person name="Zhai B."/>
            <person name="Villen J."/>
            <person name="Beausoleil S.A."/>
            <person name="Mintseris J."/>
            <person name="Gygi S.P."/>
        </authorList>
    </citation>
    <scope>PHOSPHORYLATION [LARGE SCALE ANALYSIS] AT SER-924</scope>
    <scope>IDENTIFICATION BY MASS SPECTROMETRY</scope>
    <source>
        <tissue>Embryo</tissue>
    </source>
</reference>
<reference key="6">
    <citation type="journal article" date="2013" name="Genes Cells">
        <title>fat facets induces polyubiquitination of Imd and inhibits the innate immune response in Drosophila.</title>
        <authorList>
            <person name="Yagi Y."/>
            <person name="Lim Y.M."/>
            <person name="Tsuda L."/>
            <person name="Nishida Y."/>
        </authorList>
    </citation>
    <scope>FUNCTION</scope>
    <scope>CATALYTIC ACTIVITY</scope>
    <scope>INTERACTION WITH IMD</scope>
    <scope>TISSUE SPECIFICITY</scope>
    <scope>UBIQUITINATION</scope>
    <scope>MUTAGENESIS OF CYS-1677</scope>
</reference>
<organism>
    <name type="scientific">Drosophila melanogaster</name>
    <name type="common">Fruit fly</name>
    <dbReference type="NCBI Taxonomy" id="7227"/>
    <lineage>
        <taxon>Eukaryota</taxon>
        <taxon>Metazoa</taxon>
        <taxon>Ecdysozoa</taxon>
        <taxon>Arthropoda</taxon>
        <taxon>Hexapoda</taxon>
        <taxon>Insecta</taxon>
        <taxon>Pterygota</taxon>
        <taxon>Neoptera</taxon>
        <taxon>Endopterygota</taxon>
        <taxon>Diptera</taxon>
        <taxon>Brachycera</taxon>
        <taxon>Muscomorpha</taxon>
        <taxon>Ephydroidea</taxon>
        <taxon>Drosophilidae</taxon>
        <taxon>Drosophila</taxon>
        <taxon>Sophophora</taxon>
    </lineage>
</organism>
<sequence length="2778" mass="311143">MTFDTRRHTTGQPGSTAPSSSSSTTSTTTTTTSPAQSAGSGSGIGTGTGTVANSSLPGGGSGSLDGNQDQQPATDSQSSDDVAASLSANSVDSTITIVPPEKLISSFPTTKLRSLTQKISNPRWVVPVLPEQELEVLLNAAIELTQAGVDHDCEPCVEFYRNGLSTSFAKILTDEAVNSWKNNIHHCILVSCGKLLHLIAIHMQRDNPYLLDLLAIVFDPENKFNTFNAGRQPECFAAPDYIWGQLDSNKMYARPPPEPKNARGWLVDLINRFGQLGGFDNLLERFNIGLELLKRNQNKCTGKNISVEGRVENGAQDNRLTLALIHSLLRPFGQCYELLMPATIAKYFMPTWNVVLDLLDSFTDEELKREVKPEGRNDYINGIVKSARLLASRLTGQEELIRDLEMFRLKMILRLLQVSSFNGKMNALNEINKVLSSVAYFSHRSQPLPHCMPEDEMDWLTADRMAQWIKSSDVLGVVLKDSLHQPQYVEKLEKIIRFLIKEQALTLDDLDAVWRAQAGKHEAIVKNVHDLLAKLAWDFTPEQLDHLFEAFQASMTTANKRQRERLLELIRRLAEDDKNGVMAQKVLKLFWTLAHSQEVPPEVLDQALGAHVKILDYSCSQERDAQKTIWLDKCVDELKSGDGWVLPALRLIRDICCLYDTTTNHAQRTQTSTNRQQVIERLQNDYSLVILVTNSLTAYMEKVRQMVTDSPGLDATRILIDGRFPHHVQIAERLEFLKFLLKDGQLWLCADQAKQIWHCLAVNAVFPADREECFRWFGKLMGEEPDLDPGINKDFFENNILQLDPHLLTESGIKCFERFFKAVNSKEDKLKAIHRGYMLDNEDLIGKDYLWRVITTGGEEIASKAIDLLKEVSTALGPRLQENIAEFHEMFIGECCSRLRTHYGNIVILGKTQLQEELDAPDQSDNTNDESKDSKMRFIEAEKMCRILKVLQEYVKECDRSFSGDRVHLPLSRVTRGKNTILYIRFQNPGRSIDDMEIVTHSNETMAAFKRNLLKRIKGTSTANIKVDLFYANDEMIGVSDEINPLYQYTIRDKMNLTAKLTPVGTGLASSPDSSSDSSTGSPPRPCPDMQRVESESTLPGVIISQNYQYTEFFLKLYQLGSDLEHGRLRDSAKVLLHLLPCDRQTIRQLKIMCKVPKAAVTVAVTGDKIAKDEEEKLYPTEQAGIEDEEEHCTPEQMFLHPTPAQVLYNLSVLHGLLIPALDPLGESALLVQSAWMHSGCAHFVLELLTKNNFLPSADMHTKRASFQCVLRLAKLFLYIVGSVLSRVGDEPMICDLDNGSRSQVDILKQNFSTMPSSSQGTLRAISAKLAVILAREMLSASPEGDRCRTLFSSTLQWSCPDISTIKAVVQLAWASSCGNLQALGNSSGDFEDEVIVPDGQDFSMCKEALEVLTISFILNPSANEALTSDPNWPKFITSIVLKNPLRHVRQVASEQLFLASTYCAGDRRPFVYMVNLLVGALKTLVPQYESTCAEFFSVLCRTLSYGCIYNWPLQISEGLLGDEIKWLQRIRENVHATGDTQVHEELLEGHLCLAKELMFFLGADSKAQLNELIHELIDDFLFTASREFLHLRRHGSLRQDTVPPPVCRSPHTIAAACDLLIALCQLCVPNMKLLTNTLIDFVCTDTDPLREWDYLPPVGARPTKGFCGLKNAGATCYMNSVLQQLYMVPAVRVGILRAHGAATTDGEDFSGDSDLTGGGLGSALFSGPASALVSLPSSSSTIEDGLHDVRKNYHVVILKHVQAIFAHLGHSALQYYVPRGLWTHFKLLGEPVNLREQQDAVEFFMSLLESLDEGLKALGQPQLMNATLGGSFSDQKICQECPHRYSKEEPFSVFSVDIRNHSSLTESLEQYVKGELLEGADAYHCDKCDKKVVTVKRVCVKKLPPVLAIQLKRFEYDYERVCAIKFNDYFEFPRILDMEPYTVSGLAKLEGEVVEVGDNCQTNVETTKYELTGIVVHSGQASGGHYFSYILSKNPANGKCQWYKFDDGEVTECKMHEDEEMKAECFGGEYMGETYDNNLKRMQYRRQKRWWNAYMLFYTRCDQTPVQYEPSVEQLSLAESRNMVLPLPKPIERSVRHQNIRFLHSRSIFSVEFFNFIKKLVSCNLLSARSNKITPAAEELSLLGVQLASQFLFHTGFRTKKSLRGPVMEWYDALSHHIRSSALVRKWFANHALLSPPSRLGEYILMAPSPDVRTVFVKLVVFFCHFAINDEPLTGYDGANLCEQVLISVLRLLKSEAADYGKHLPHYFSLFSMYVGLGTREKQQLLRLNVPLQFIQVALDDGPGPAIKYQYPEFSKLHQVVSHLIRCSDVSEKCQSSNQNARPLSNPFKDPNVAHEELTPLSTECMDLLFNRTGYIKKVIEDTNVGDEGLKLLQYCSWENPHFSRAVLTELLWQCGFAYCHDMRHHTDLLLNILLIDDSWQHHRIHNALNGVAEEREGLLETIQRAKTHYQKRAYQIIKCLTQLFHKSPIALQMLHTNSNITRHWSIAVEWLQGELDRQRGIGCQYNSYSWSPPAQSNDNTNGYMLERSQSAKNTWSMAFELCPDEVSEKTDENNEPNLETNMDENKSEPVAQPGGVLEGSTGGTEQLPENKTPTTSSPSTAAWPARGDSNAIPRLSRQLFGAYTSTGSGSTSGGSAPTSALTTTAGSGANSETESSAQETTGETTINGLTNSLDQMEITAKKKCRRVIIKKLVESKDEEDATTATTAATTEVTTSPATAIATAATLEPAGMSELTTMVEKNLIISQENPQAKSSLQ</sequence>
<protein>
    <recommendedName>
        <fullName>Probable ubiquitin carboxyl-terminal hydrolase FAF</fullName>
        <ecNumber evidence="7">3.4.19.12</ecNumber>
    </recommendedName>
    <alternativeName>
        <fullName>Protein fat facets</fullName>
    </alternativeName>
    <alternativeName>
        <fullName>Ubiquitin thioesterase FAF</fullName>
    </alternativeName>
    <alternativeName>
        <fullName>Ubiquitin-specific-processing protease FAF</fullName>
        <shortName>Deubiquitinating enzyme FAF</shortName>
    </alternativeName>
</protein>